<sequence length="310" mass="34278">MKILLANPRGFCAGVDRAITIVKNALHKFGAPVYVRHEVVHNKYVVDELKAMGAIFVDELDEIPDGNTVIFSAHGVPKRVREEARKRGLQVFDATCPLVTKVHMEVHRASRKGQEVVLIGHKGHPEVEGTLGQYDENGTGMYLVEDANQVDSLPVQQPEKVSFVTQTTLSVDETRDIIDALREHFPAIQGPRKDDICYATQNRQDAVRALAPQVDVMLVVGSKNSSNSNRLRELAERLGTRAYLLDDASQLQDEWFTNVNSVGVTAGASAPEVLVQSVIDRLYQLGGSKLEQMDGVIEDTVFEVPVELRV</sequence>
<evidence type="ECO:0000255" key="1">
    <source>
        <dbReference type="HAMAP-Rule" id="MF_00191"/>
    </source>
</evidence>
<organism>
    <name type="scientific">Tolumonas auensis (strain DSM 9187 / NBRC 110442 / TA 4)</name>
    <dbReference type="NCBI Taxonomy" id="595494"/>
    <lineage>
        <taxon>Bacteria</taxon>
        <taxon>Pseudomonadati</taxon>
        <taxon>Pseudomonadota</taxon>
        <taxon>Gammaproteobacteria</taxon>
        <taxon>Aeromonadales</taxon>
        <taxon>Aeromonadaceae</taxon>
        <taxon>Tolumonas</taxon>
    </lineage>
</organism>
<proteinExistence type="inferred from homology"/>
<reference key="1">
    <citation type="submission" date="2009-05" db="EMBL/GenBank/DDBJ databases">
        <title>Complete sequence of Tolumonas auensis DSM 9187.</title>
        <authorList>
            <consortium name="US DOE Joint Genome Institute"/>
            <person name="Lucas S."/>
            <person name="Copeland A."/>
            <person name="Lapidus A."/>
            <person name="Glavina del Rio T."/>
            <person name="Tice H."/>
            <person name="Bruce D."/>
            <person name="Goodwin L."/>
            <person name="Pitluck S."/>
            <person name="Chertkov O."/>
            <person name="Brettin T."/>
            <person name="Detter J.C."/>
            <person name="Han C."/>
            <person name="Larimer F."/>
            <person name="Land M."/>
            <person name="Hauser L."/>
            <person name="Kyrpides N."/>
            <person name="Mikhailova N."/>
            <person name="Spring S."/>
            <person name="Beller H."/>
        </authorList>
    </citation>
    <scope>NUCLEOTIDE SEQUENCE [LARGE SCALE GENOMIC DNA]</scope>
    <source>
        <strain>DSM 9187 / NBRC 110442 / TA 4</strain>
    </source>
</reference>
<name>ISPH_TOLAT</name>
<feature type="chain" id="PRO_1000204012" description="4-hydroxy-3-methylbut-2-enyl diphosphate reductase">
    <location>
        <begin position="1"/>
        <end position="310"/>
    </location>
</feature>
<feature type="active site" description="Proton donor" evidence="1">
    <location>
        <position position="126"/>
    </location>
</feature>
<feature type="binding site" evidence="1">
    <location>
        <position position="12"/>
    </location>
    <ligand>
        <name>[4Fe-4S] cluster</name>
        <dbReference type="ChEBI" id="CHEBI:49883"/>
    </ligand>
</feature>
<feature type="binding site" evidence="1">
    <location>
        <position position="41"/>
    </location>
    <ligand>
        <name>(2E)-4-hydroxy-3-methylbut-2-enyl diphosphate</name>
        <dbReference type="ChEBI" id="CHEBI:128753"/>
    </ligand>
</feature>
<feature type="binding site" evidence="1">
    <location>
        <position position="41"/>
    </location>
    <ligand>
        <name>dimethylallyl diphosphate</name>
        <dbReference type="ChEBI" id="CHEBI:57623"/>
    </ligand>
</feature>
<feature type="binding site" evidence="1">
    <location>
        <position position="41"/>
    </location>
    <ligand>
        <name>isopentenyl diphosphate</name>
        <dbReference type="ChEBI" id="CHEBI:128769"/>
    </ligand>
</feature>
<feature type="binding site" evidence="1">
    <location>
        <position position="74"/>
    </location>
    <ligand>
        <name>(2E)-4-hydroxy-3-methylbut-2-enyl diphosphate</name>
        <dbReference type="ChEBI" id="CHEBI:128753"/>
    </ligand>
</feature>
<feature type="binding site" evidence="1">
    <location>
        <position position="74"/>
    </location>
    <ligand>
        <name>dimethylallyl diphosphate</name>
        <dbReference type="ChEBI" id="CHEBI:57623"/>
    </ligand>
</feature>
<feature type="binding site" evidence="1">
    <location>
        <position position="74"/>
    </location>
    <ligand>
        <name>isopentenyl diphosphate</name>
        <dbReference type="ChEBI" id="CHEBI:128769"/>
    </ligand>
</feature>
<feature type="binding site" evidence="1">
    <location>
        <position position="96"/>
    </location>
    <ligand>
        <name>[4Fe-4S] cluster</name>
        <dbReference type="ChEBI" id="CHEBI:49883"/>
    </ligand>
</feature>
<feature type="binding site" evidence="1">
    <location>
        <position position="124"/>
    </location>
    <ligand>
        <name>(2E)-4-hydroxy-3-methylbut-2-enyl diphosphate</name>
        <dbReference type="ChEBI" id="CHEBI:128753"/>
    </ligand>
</feature>
<feature type="binding site" evidence="1">
    <location>
        <position position="124"/>
    </location>
    <ligand>
        <name>dimethylallyl diphosphate</name>
        <dbReference type="ChEBI" id="CHEBI:57623"/>
    </ligand>
</feature>
<feature type="binding site" evidence="1">
    <location>
        <position position="124"/>
    </location>
    <ligand>
        <name>isopentenyl diphosphate</name>
        <dbReference type="ChEBI" id="CHEBI:128769"/>
    </ligand>
</feature>
<feature type="binding site" evidence="1">
    <location>
        <position position="167"/>
    </location>
    <ligand>
        <name>(2E)-4-hydroxy-3-methylbut-2-enyl diphosphate</name>
        <dbReference type="ChEBI" id="CHEBI:128753"/>
    </ligand>
</feature>
<feature type="binding site" evidence="1">
    <location>
        <position position="197"/>
    </location>
    <ligand>
        <name>[4Fe-4S] cluster</name>
        <dbReference type="ChEBI" id="CHEBI:49883"/>
    </ligand>
</feature>
<feature type="binding site" evidence="1">
    <location>
        <position position="225"/>
    </location>
    <ligand>
        <name>(2E)-4-hydroxy-3-methylbut-2-enyl diphosphate</name>
        <dbReference type="ChEBI" id="CHEBI:128753"/>
    </ligand>
</feature>
<feature type="binding site" evidence="1">
    <location>
        <position position="225"/>
    </location>
    <ligand>
        <name>dimethylallyl diphosphate</name>
        <dbReference type="ChEBI" id="CHEBI:57623"/>
    </ligand>
</feature>
<feature type="binding site" evidence="1">
    <location>
        <position position="225"/>
    </location>
    <ligand>
        <name>isopentenyl diphosphate</name>
        <dbReference type="ChEBI" id="CHEBI:128769"/>
    </ligand>
</feature>
<feature type="binding site" evidence="1">
    <location>
        <position position="226"/>
    </location>
    <ligand>
        <name>(2E)-4-hydroxy-3-methylbut-2-enyl diphosphate</name>
        <dbReference type="ChEBI" id="CHEBI:128753"/>
    </ligand>
</feature>
<feature type="binding site" evidence="1">
    <location>
        <position position="226"/>
    </location>
    <ligand>
        <name>dimethylallyl diphosphate</name>
        <dbReference type="ChEBI" id="CHEBI:57623"/>
    </ligand>
</feature>
<feature type="binding site" evidence="1">
    <location>
        <position position="226"/>
    </location>
    <ligand>
        <name>isopentenyl diphosphate</name>
        <dbReference type="ChEBI" id="CHEBI:128769"/>
    </ligand>
</feature>
<feature type="binding site" evidence="1">
    <location>
        <position position="227"/>
    </location>
    <ligand>
        <name>(2E)-4-hydroxy-3-methylbut-2-enyl diphosphate</name>
        <dbReference type="ChEBI" id="CHEBI:128753"/>
    </ligand>
</feature>
<feature type="binding site" evidence="1">
    <location>
        <position position="227"/>
    </location>
    <ligand>
        <name>dimethylallyl diphosphate</name>
        <dbReference type="ChEBI" id="CHEBI:57623"/>
    </ligand>
</feature>
<feature type="binding site" evidence="1">
    <location>
        <position position="227"/>
    </location>
    <ligand>
        <name>isopentenyl diphosphate</name>
        <dbReference type="ChEBI" id="CHEBI:128769"/>
    </ligand>
</feature>
<feature type="binding site" evidence="1">
    <location>
        <position position="269"/>
    </location>
    <ligand>
        <name>(2E)-4-hydroxy-3-methylbut-2-enyl diphosphate</name>
        <dbReference type="ChEBI" id="CHEBI:128753"/>
    </ligand>
</feature>
<feature type="binding site" evidence="1">
    <location>
        <position position="269"/>
    </location>
    <ligand>
        <name>dimethylallyl diphosphate</name>
        <dbReference type="ChEBI" id="CHEBI:57623"/>
    </ligand>
</feature>
<feature type="binding site" evidence="1">
    <location>
        <position position="269"/>
    </location>
    <ligand>
        <name>isopentenyl diphosphate</name>
        <dbReference type="ChEBI" id="CHEBI:128769"/>
    </ligand>
</feature>
<dbReference type="EC" id="1.17.7.4" evidence="1"/>
<dbReference type="EMBL" id="CP001616">
    <property type="protein sequence ID" value="ACQ94541.1"/>
    <property type="molecule type" value="Genomic_DNA"/>
</dbReference>
<dbReference type="RefSeq" id="WP_015879990.1">
    <property type="nucleotide sequence ID" value="NC_012691.1"/>
</dbReference>
<dbReference type="SMR" id="C4LD10"/>
<dbReference type="STRING" id="595494.Tola_2952"/>
<dbReference type="KEGG" id="tau:Tola_2952"/>
<dbReference type="eggNOG" id="COG0761">
    <property type="taxonomic scope" value="Bacteria"/>
</dbReference>
<dbReference type="HOGENOM" id="CLU_027486_1_1_6"/>
<dbReference type="OrthoDB" id="9804068at2"/>
<dbReference type="UniPathway" id="UPA00056">
    <property type="reaction ID" value="UER00097"/>
</dbReference>
<dbReference type="UniPathway" id="UPA00059">
    <property type="reaction ID" value="UER00105"/>
</dbReference>
<dbReference type="Proteomes" id="UP000009073">
    <property type="component" value="Chromosome"/>
</dbReference>
<dbReference type="GO" id="GO:0051539">
    <property type="term" value="F:4 iron, 4 sulfur cluster binding"/>
    <property type="evidence" value="ECO:0007669"/>
    <property type="project" value="UniProtKB-UniRule"/>
</dbReference>
<dbReference type="GO" id="GO:0051745">
    <property type="term" value="F:4-hydroxy-3-methylbut-2-enyl diphosphate reductase activity"/>
    <property type="evidence" value="ECO:0007669"/>
    <property type="project" value="UniProtKB-UniRule"/>
</dbReference>
<dbReference type="GO" id="GO:0046872">
    <property type="term" value="F:metal ion binding"/>
    <property type="evidence" value="ECO:0007669"/>
    <property type="project" value="UniProtKB-KW"/>
</dbReference>
<dbReference type="GO" id="GO:0050992">
    <property type="term" value="P:dimethylallyl diphosphate biosynthetic process"/>
    <property type="evidence" value="ECO:0007669"/>
    <property type="project" value="UniProtKB-UniRule"/>
</dbReference>
<dbReference type="GO" id="GO:0019288">
    <property type="term" value="P:isopentenyl diphosphate biosynthetic process, methylerythritol 4-phosphate pathway"/>
    <property type="evidence" value="ECO:0007669"/>
    <property type="project" value="UniProtKB-UniRule"/>
</dbReference>
<dbReference type="GO" id="GO:0016114">
    <property type="term" value="P:terpenoid biosynthetic process"/>
    <property type="evidence" value="ECO:0007669"/>
    <property type="project" value="UniProtKB-UniRule"/>
</dbReference>
<dbReference type="CDD" id="cd13944">
    <property type="entry name" value="lytB_ispH"/>
    <property type="match status" value="1"/>
</dbReference>
<dbReference type="Gene3D" id="3.40.50.11270">
    <property type="match status" value="1"/>
</dbReference>
<dbReference type="Gene3D" id="3.40.1010.20">
    <property type="entry name" value="4-hydroxy-3-methylbut-2-enyl diphosphate reductase, catalytic domain"/>
    <property type="match status" value="2"/>
</dbReference>
<dbReference type="HAMAP" id="MF_00191">
    <property type="entry name" value="IspH"/>
    <property type="match status" value="1"/>
</dbReference>
<dbReference type="InterPro" id="IPR003451">
    <property type="entry name" value="LytB/IspH"/>
</dbReference>
<dbReference type="NCBIfam" id="TIGR00216">
    <property type="entry name" value="ispH_lytB"/>
    <property type="match status" value="1"/>
</dbReference>
<dbReference type="NCBIfam" id="NF002188">
    <property type="entry name" value="PRK01045.1-2"/>
    <property type="match status" value="1"/>
</dbReference>
<dbReference type="NCBIfam" id="NF002190">
    <property type="entry name" value="PRK01045.1-4"/>
    <property type="match status" value="1"/>
</dbReference>
<dbReference type="PANTHER" id="PTHR30426">
    <property type="entry name" value="4-HYDROXY-3-METHYLBUT-2-ENYL DIPHOSPHATE REDUCTASE"/>
    <property type="match status" value="1"/>
</dbReference>
<dbReference type="PANTHER" id="PTHR30426:SF0">
    <property type="entry name" value="4-HYDROXY-3-METHYLBUT-2-ENYL DIPHOSPHATE REDUCTASE"/>
    <property type="match status" value="1"/>
</dbReference>
<dbReference type="Pfam" id="PF02401">
    <property type="entry name" value="LYTB"/>
    <property type="match status" value="1"/>
</dbReference>
<accession>C4LD10</accession>
<protein>
    <recommendedName>
        <fullName evidence="1">4-hydroxy-3-methylbut-2-enyl diphosphate reductase</fullName>
        <shortName evidence="1">HMBPP reductase</shortName>
        <ecNumber evidence="1">1.17.7.4</ecNumber>
    </recommendedName>
</protein>
<comment type="function">
    <text evidence="1">Catalyzes the conversion of 1-hydroxy-2-methyl-2-(E)-butenyl 4-diphosphate (HMBPP) into a mixture of isopentenyl diphosphate (IPP) and dimethylallyl diphosphate (DMAPP). Acts in the terminal step of the DOXP/MEP pathway for isoprenoid precursor biosynthesis.</text>
</comment>
<comment type="catalytic activity">
    <reaction evidence="1">
        <text>isopentenyl diphosphate + 2 oxidized [2Fe-2S]-[ferredoxin] + H2O = (2E)-4-hydroxy-3-methylbut-2-enyl diphosphate + 2 reduced [2Fe-2S]-[ferredoxin] + 2 H(+)</text>
        <dbReference type="Rhea" id="RHEA:24488"/>
        <dbReference type="Rhea" id="RHEA-COMP:10000"/>
        <dbReference type="Rhea" id="RHEA-COMP:10001"/>
        <dbReference type="ChEBI" id="CHEBI:15377"/>
        <dbReference type="ChEBI" id="CHEBI:15378"/>
        <dbReference type="ChEBI" id="CHEBI:33737"/>
        <dbReference type="ChEBI" id="CHEBI:33738"/>
        <dbReference type="ChEBI" id="CHEBI:128753"/>
        <dbReference type="ChEBI" id="CHEBI:128769"/>
        <dbReference type="EC" id="1.17.7.4"/>
    </reaction>
</comment>
<comment type="catalytic activity">
    <reaction evidence="1">
        <text>dimethylallyl diphosphate + 2 oxidized [2Fe-2S]-[ferredoxin] + H2O = (2E)-4-hydroxy-3-methylbut-2-enyl diphosphate + 2 reduced [2Fe-2S]-[ferredoxin] + 2 H(+)</text>
        <dbReference type="Rhea" id="RHEA:24825"/>
        <dbReference type="Rhea" id="RHEA-COMP:10000"/>
        <dbReference type="Rhea" id="RHEA-COMP:10001"/>
        <dbReference type="ChEBI" id="CHEBI:15377"/>
        <dbReference type="ChEBI" id="CHEBI:15378"/>
        <dbReference type="ChEBI" id="CHEBI:33737"/>
        <dbReference type="ChEBI" id="CHEBI:33738"/>
        <dbReference type="ChEBI" id="CHEBI:57623"/>
        <dbReference type="ChEBI" id="CHEBI:128753"/>
        <dbReference type="EC" id="1.17.7.4"/>
    </reaction>
</comment>
<comment type="cofactor">
    <cofactor evidence="1">
        <name>[4Fe-4S] cluster</name>
        <dbReference type="ChEBI" id="CHEBI:49883"/>
    </cofactor>
    <text evidence="1">Binds 1 [4Fe-4S] cluster per subunit.</text>
</comment>
<comment type="pathway">
    <text evidence="1">Isoprenoid biosynthesis; dimethylallyl diphosphate biosynthesis; dimethylallyl diphosphate from (2E)-4-hydroxy-3-methylbutenyl diphosphate: step 1/1.</text>
</comment>
<comment type="pathway">
    <text evidence="1">Isoprenoid biosynthesis; isopentenyl diphosphate biosynthesis via DXP pathway; isopentenyl diphosphate from 1-deoxy-D-xylulose 5-phosphate: step 6/6.</text>
</comment>
<comment type="similarity">
    <text evidence="1">Belongs to the IspH family.</text>
</comment>
<gene>
    <name evidence="1" type="primary">ispH</name>
    <name type="ordered locus">Tola_2952</name>
</gene>
<keyword id="KW-0004">4Fe-4S</keyword>
<keyword id="KW-0408">Iron</keyword>
<keyword id="KW-0411">Iron-sulfur</keyword>
<keyword id="KW-0414">Isoprene biosynthesis</keyword>
<keyword id="KW-0479">Metal-binding</keyword>
<keyword id="KW-0560">Oxidoreductase</keyword>
<keyword id="KW-1185">Reference proteome</keyword>